<evidence type="ECO:0000250" key="1"/>
<evidence type="ECO:0000255" key="2">
    <source>
        <dbReference type="PROSITE-ProRule" id="PRU00366"/>
    </source>
</evidence>
<evidence type="ECO:0000256" key="3">
    <source>
        <dbReference type="SAM" id="MobiDB-lite"/>
    </source>
</evidence>
<evidence type="ECO:0000269" key="4">
    <source>
    </source>
</evidence>
<evidence type="ECO:0000305" key="5"/>
<feature type="chain" id="PRO_0000112540" description="Dehydration-responsive element-binding protein 2G">
    <location>
        <begin position="1"/>
        <end position="307"/>
    </location>
</feature>
<feature type="DNA-binding region" description="AP2/ERF" evidence="2">
    <location>
        <begin position="33"/>
        <end position="90"/>
    </location>
</feature>
<feature type="region of interest" description="Disordered" evidence="3">
    <location>
        <begin position="1"/>
        <end position="27"/>
    </location>
</feature>
<feature type="region of interest" description="Disordered" evidence="3">
    <location>
        <begin position="235"/>
        <end position="257"/>
    </location>
</feature>
<feature type="compositionally biased region" description="Basic residues" evidence="3">
    <location>
        <begin position="8"/>
        <end position="21"/>
    </location>
</feature>
<protein>
    <recommendedName>
        <fullName>Dehydration-responsive element-binding protein 2G</fullName>
        <shortName>Protein DREB2G</shortName>
    </recommendedName>
</protein>
<gene>
    <name type="primary">DREB2G</name>
    <name type="synonym">ERF050</name>
    <name type="ordered locus">At5g18450</name>
    <name type="ORF">F20L16.170</name>
</gene>
<sequence length="307" mass="34234">MEEEQPPAKKRNMGRSRKGCMKGKGGPENATCTFRGVRQRTWGKWVAEIREPNRGTRLWLGTFNTSVEAAMAYDEAAKKLYGHEAKLNLVHPQQQQQVVVNRNLSFSGHGSGSWAYNKKLDMVHGLDLGLGQASCSRGSCSERSSFLQEDDDHSHNRCSSSSGSNLCWLLPKQSDSQDQETVNATTSYGGEGGGGSTLTFSTNLKPKNLMSQNYGLYNGAWSRFLVGQEKKTEHDVSSSCGSSDNKESMLVPSCGGERMHRPELEERTGYLEMDDLLEIDDLGLLIGKNGDFKNWCCEEFQHPWNWF</sequence>
<organism>
    <name type="scientific">Arabidopsis thaliana</name>
    <name type="common">Mouse-ear cress</name>
    <dbReference type="NCBI Taxonomy" id="3702"/>
    <lineage>
        <taxon>Eukaryota</taxon>
        <taxon>Viridiplantae</taxon>
        <taxon>Streptophyta</taxon>
        <taxon>Embryophyta</taxon>
        <taxon>Tracheophyta</taxon>
        <taxon>Spermatophyta</taxon>
        <taxon>Magnoliopsida</taxon>
        <taxon>eudicotyledons</taxon>
        <taxon>Gunneridae</taxon>
        <taxon>Pentapetalae</taxon>
        <taxon>rosids</taxon>
        <taxon>malvids</taxon>
        <taxon>Brassicales</taxon>
        <taxon>Brassicaceae</taxon>
        <taxon>Camelineae</taxon>
        <taxon>Arabidopsis</taxon>
    </lineage>
</organism>
<comment type="function">
    <text evidence="1 4">Transcriptional activator that binds specifically to the DNA sequence 5'-[AG]CCGAC-3'.</text>
</comment>
<comment type="interaction">
    <interactant intactId="EBI-15202030">
        <id>P61827</id>
    </interactant>
    <interactant intactId="EBI-15193025">
        <id>Q9LXU1</id>
        <label>NOT9B</label>
    </interactant>
    <organismsDiffer>false</organismsDiffer>
    <experiments>3</experiments>
</comment>
<comment type="subcellular location">
    <subcellularLocation>
        <location evidence="5">Nucleus</location>
    </subcellularLocation>
</comment>
<comment type="similarity">
    <text evidence="5">Belongs to the AP2/ERF transcription factor family. ERF subfamily.</text>
</comment>
<proteinExistence type="evidence at protein level"/>
<accession>P61827</accession>
<accession>Q147L9</accession>
<accession>Q6J9S2</accession>
<reference key="1">
    <citation type="submission" date="2004-02" db="EMBL/GenBank/DDBJ databases">
        <title>Molecular cloning, expression, phylogenetic and functional characterization of the Arabidopsis AP2/EREBP transcription factor family.</title>
        <authorList>
            <person name="Pan Y."/>
            <person name="Gong W."/>
            <person name="Liu D."/>
            <person name="Fu Q."/>
            <person name="Mei W.-Q."/>
            <person name="Song W.-Q."/>
            <person name="Ma L.-G."/>
            <person name="Luo J.-C."/>
            <person name="Deng X.-W."/>
            <person name="Zhu Y.-X."/>
        </authorList>
    </citation>
    <scope>NUCLEOTIDE SEQUENCE [MRNA]</scope>
</reference>
<reference key="2">
    <citation type="journal article" date="2000" name="Nature">
        <title>Sequence and analysis of chromosome 5 of the plant Arabidopsis thaliana.</title>
        <authorList>
            <person name="Tabata S."/>
            <person name="Kaneko T."/>
            <person name="Nakamura Y."/>
            <person name="Kotani H."/>
            <person name="Kato T."/>
            <person name="Asamizu E."/>
            <person name="Miyajima N."/>
            <person name="Sasamoto S."/>
            <person name="Kimura T."/>
            <person name="Hosouchi T."/>
            <person name="Kawashima K."/>
            <person name="Kohara M."/>
            <person name="Matsumoto M."/>
            <person name="Matsuno A."/>
            <person name="Muraki A."/>
            <person name="Nakayama S."/>
            <person name="Nakazaki N."/>
            <person name="Naruo K."/>
            <person name="Okumura S."/>
            <person name="Shinpo S."/>
            <person name="Takeuchi C."/>
            <person name="Wada T."/>
            <person name="Watanabe A."/>
            <person name="Yamada M."/>
            <person name="Yasuda M."/>
            <person name="Sato S."/>
            <person name="de la Bastide M."/>
            <person name="Huang E."/>
            <person name="Spiegel L."/>
            <person name="Gnoj L."/>
            <person name="O'Shaughnessy A."/>
            <person name="Preston R."/>
            <person name="Habermann K."/>
            <person name="Murray J."/>
            <person name="Johnson D."/>
            <person name="Rohlfing T."/>
            <person name="Nelson J."/>
            <person name="Stoneking T."/>
            <person name="Pepin K."/>
            <person name="Spieth J."/>
            <person name="Sekhon M."/>
            <person name="Armstrong J."/>
            <person name="Becker M."/>
            <person name="Belter E."/>
            <person name="Cordum H."/>
            <person name="Cordes M."/>
            <person name="Courtney L."/>
            <person name="Courtney W."/>
            <person name="Dante M."/>
            <person name="Du H."/>
            <person name="Edwards J."/>
            <person name="Fryman J."/>
            <person name="Haakensen B."/>
            <person name="Lamar E."/>
            <person name="Latreille P."/>
            <person name="Leonard S."/>
            <person name="Meyer R."/>
            <person name="Mulvaney E."/>
            <person name="Ozersky P."/>
            <person name="Riley A."/>
            <person name="Strowmatt C."/>
            <person name="Wagner-McPherson C."/>
            <person name="Wollam A."/>
            <person name="Yoakum M."/>
            <person name="Bell M."/>
            <person name="Dedhia N."/>
            <person name="Parnell L."/>
            <person name="Shah R."/>
            <person name="Rodriguez M."/>
            <person name="Hoon See L."/>
            <person name="Vil D."/>
            <person name="Baker J."/>
            <person name="Kirchoff K."/>
            <person name="Toth K."/>
            <person name="King L."/>
            <person name="Bahret A."/>
            <person name="Miller B."/>
            <person name="Marra M.A."/>
            <person name="Martienssen R."/>
            <person name="McCombie W.R."/>
            <person name="Wilson R.K."/>
            <person name="Murphy G."/>
            <person name="Bancroft I."/>
            <person name="Volckaert G."/>
            <person name="Wambutt R."/>
            <person name="Duesterhoeft A."/>
            <person name="Stiekema W."/>
            <person name="Pohl T."/>
            <person name="Entian K.-D."/>
            <person name="Terryn N."/>
            <person name="Hartley N."/>
            <person name="Bent E."/>
            <person name="Johnson S."/>
            <person name="Langham S.-A."/>
            <person name="McCullagh B."/>
            <person name="Robben J."/>
            <person name="Grymonprez B."/>
            <person name="Zimmermann W."/>
            <person name="Ramsperger U."/>
            <person name="Wedler H."/>
            <person name="Balke K."/>
            <person name="Wedler E."/>
            <person name="Peters S."/>
            <person name="van Staveren M."/>
            <person name="Dirkse W."/>
            <person name="Mooijman P."/>
            <person name="Klein Lankhorst R."/>
            <person name="Weitzenegger T."/>
            <person name="Bothe G."/>
            <person name="Rose M."/>
            <person name="Hauf J."/>
            <person name="Berneiser S."/>
            <person name="Hempel S."/>
            <person name="Feldpausch M."/>
            <person name="Lamberth S."/>
            <person name="Villarroel R."/>
            <person name="Gielen J."/>
            <person name="Ardiles W."/>
            <person name="Bents O."/>
            <person name="Lemcke K."/>
            <person name="Kolesov G."/>
            <person name="Mayer K.F.X."/>
            <person name="Rudd S."/>
            <person name="Schoof H."/>
            <person name="Schueller C."/>
            <person name="Zaccaria P."/>
            <person name="Mewes H.-W."/>
            <person name="Bevan M."/>
            <person name="Fransz P.F."/>
        </authorList>
    </citation>
    <scope>NUCLEOTIDE SEQUENCE [LARGE SCALE GENOMIC DNA]</scope>
    <source>
        <strain>cv. Columbia</strain>
    </source>
</reference>
<reference key="3">
    <citation type="journal article" date="2017" name="Plant J.">
        <title>Araport11: a complete reannotation of the Arabidopsis thaliana reference genome.</title>
        <authorList>
            <person name="Cheng C.Y."/>
            <person name="Krishnakumar V."/>
            <person name="Chan A.P."/>
            <person name="Thibaud-Nissen F."/>
            <person name="Schobel S."/>
            <person name="Town C.D."/>
        </authorList>
    </citation>
    <scope>GENOME REANNOTATION</scope>
    <source>
        <strain>cv. Columbia</strain>
    </source>
</reference>
<reference key="4">
    <citation type="submission" date="2006-07" db="EMBL/GenBank/DDBJ databases">
        <title>Arabidopsis ORF clones.</title>
        <authorList>
            <person name="Quinitio C."/>
            <person name="Chen H."/>
            <person name="Kim C.J."/>
            <person name="Shinn P."/>
            <person name="Ecker J.R."/>
        </authorList>
    </citation>
    <scope>NUCLEOTIDE SEQUENCE [LARGE SCALE MRNA]</scope>
    <source>
        <strain>cv. Columbia</strain>
    </source>
</reference>
<reference key="5">
    <citation type="journal article" date="2002" name="Biochem. Biophys. Res. Commun.">
        <title>DNA-binding specificity of the ERF/AP2 domain of Arabidopsis DREBs, transcription factors involved in dehydration- and cold-inducible gene expression.</title>
        <authorList>
            <person name="Sakuma Y."/>
            <person name="Liu Q."/>
            <person name="Dubouzet J.G."/>
            <person name="Abe H."/>
            <person name="Shinozaki K."/>
            <person name="Yamaguchi-Shinozaki K."/>
        </authorList>
    </citation>
    <scope>GENE FAMILY</scope>
    <scope>FUNCTION</scope>
</reference>
<reference key="6">
    <citation type="journal article" date="2006" name="Plant Physiol.">
        <title>Genome-wide analysis of the ERF gene family in Arabidopsis and rice.</title>
        <authorList>
            <person name="Nakano T."/>
            <person name="Suzuki K."/>
            <person name="Fujimura T."/>
            <person name="Shinshi H."/>
        </authorList>
    </citation>
    <scope>GENE FAMILY</scope>
    <scope>NOMENCLATURE</scope>
</reference>
<name>DRE2G_ARATH</name>
<keyword id="KW-0010">Activator</keyword>
<keyword id="KW-0238">DNA-binding</keyword>
<keyword id="KW-0539">Nucleus</keyword>
<keyword id="KW-1185">Reference proteome</keyword>
<keyword id="KW-0804">Transcription</keyword>
<keyword id="KW-0805">Transcription regulation</keyword>
<dbReference type="EMBL" id="AY560853">
    <property type="protein sequence ID" value="AAT44920.1"/>
    <property type="molecule type" value="mRNA"/>
</dbReference>
<dbReference type="EMBL" id="AC051626">
    <property type="status" value="NOT_ANNOTATED_CDS"/>
    <property type="molecule type" value="Genomic_DNA"/>
</dbReference>
<dbReference type="EMBL" id="CP002688">
    <property type="protein sequence ID" value="AED92565.1"/>
    <property type="molecule type" value="Genomic_DNA"/>
</dbReference>
<dbReference type="EMBL" id="BT026074">
    <property type="protein sequence ID" value="ABG48430.1"/>
    <property type="molecule type" value="mRNA"/>
</dbReference>
<dbReference type="RefSeq" id="NP_197346.1">
    <property type="nucleotide sequence ID" value="NM_121850.2"/>
</dbReference>
<dbReference type="SMR" id="P61827"/>
<dbReference type="BioGRID" id="17239">
    <property type="interactions" value="13"/>
</dbReference>
<dbReference type="IntAct" id="P61827">
    <property type="interactions" value="11"/>
</dbReference>
<dbReference type="STRING" id="3702.P61827"/>
<dbReference type="PaxDb" id="3702-AT5G18450.1"/>
<dbReference type="ProteomicsDB" id="242298"/>
<dbReference type="EnsemblPlants" id="AT5G18450.1">
    <property type="protein sequence ID" value="AT5G18450.1"/>
    <property type="gene ID" value="AT5G18450"/>
</dbReference>
<dbReference type="GeneID" id="831963"/>
<dbReference type="Gramene" id="AT5G18450.1">
    <property type="protein sequence ID" value="AT5G18450.1"/>
    <property type="gene ID" value="AT5G18450"/>
</dbReference>
<dbReference type="KEGG" id="ath:AT5G18450"/>
<dbReference type="Araport" id="AT5G18450"/>
<dbReference type="TAIR" id="AT5G18450"/>
<dbReference type="eggNOG" id="ENOG502S49Z">
    <property type="taxonomic scope" value="Eukaryota"/>
</dbReference>
<dbReference type="HOGENOM" id="CLU_907179_0_0_1"/>
<dbReference type="InParanoid" id="P61827"/>
<dbReference type="OMA" id="AWSRFLV"/>
<dbReference type="OrthoDB" id="1094410at2759"/>
<dbReference type="PRO" id="PR:P61827"/>
<dbReference type="Proteomes" id="UP000006548">
    <property type="component" value="Chromosome 5"/>
</dbReference>
<dbReference type="ExpressionAtlas" id="P61827">
    <property type="expression patterns" value="baseline and differential"/>
</dbReference>
<dbReference type="GO" id="GO:0005634">
    <property type="term" value="C:nucleus"/>
    <property type="evidence" value="ECO:0007669"/>
    <property type="project" value="UniProtKB-SubCell"/>
</dbReference>
<dbReference type="GO" id="GO:0003700">
    <property type="term" value="F:DNA-binding transcription factor activity"/>
    <property type="evidence" value="ECO:0000250"/>
    <property type="project" value="TAIR"/>
</dbReference>
<dbReference type="GO" id="GO:0000976">
    <property type="term" value="F:transcription cis-regulatory region binding"/>
    <property type="evidence" value="ECO:0000353"/>
    <property type="project" value="TAIR"/>
</dbReference>
<dbReference type="CDD" id="cd00018">
    <property type="entry name" value="AP2"/>
    <property type="match status" value="1"/>
</dbReference>
<dbReference type="FunFam" id="3.30.730.10:FF:000001">
    <property type="entry name" value="Ethylene-responsive transcription factor 2"/>
    <property type="match status" value="1"/>
</dbReference>
<dbReference type="Gene3D" id="3.30.730.10">
    <property type="entry name" value="AP2/ERF domain"/>
    <property type="match status" value="1"/>
</dbReference>
<dbReference type="InterPro" id="IPR001471">
    <property type="entry name" value="AP2/ERF_dom"/>
</dbReference>
<dbReference type="InterPro" id="IPR036955">
    <property type="entry name" value="AP2/ERF_dom_sf"/>
</dbReference>
<dbReference type="InterPro" id="IPR016177">
    <property type="entry name" value="DNA-bd_dom_sf"/>
</dbReference>
<dbReference type="PANTHER" id="PTHR31241">
    <property type="entry name" value="DEHYDRATION-RESPONSIVE ELEMENT-BINDING PROTEIN 2C"/>
    <property type="match status" value="1"/>
</dbReference>
<dbReference type="PANTHER" id="PTHR31241:SF49">
    <property type="entry name" value="DEHYDRATION-RESPONSIVE ELEMENT-BINDING PROTEIN 2G"/>
    <property type="match status" value="1"/>
</dbReference>
<dbReference type="Pfam" id="PF00847">
    <property type="entry name" value="AP2"/>
    <property type="match status" value="1"/>
</dbReference>
<dbReference type="PRINTS" id="PR00367">
    <property type="entry name" value="ETHRSPELEMNT"/>
</dbReference>
<dbReference type="SMART" id="SM00380">
    <property type="entry name" value="AP2"/>
    <property type="match status" value="1"/>
</dbReference>
<dbReference type="SUPFAM" id="SSF54171">
    <property type="entry name" value="DNA-binding domain"/>
    <property type="match status" value="1"/>
</dbReference>
<dbReference type="PROSITE" id="PS51032">
    <property type="entry name" value="AP2_ERF"/>
    <property type="match status" value="1"/>
</dbReference>